<organism>
    <name type="scientific">Salmonella newport (strain SL254)</name>
    <dbReference type="NCBI Taxonomy" id="423368"/>
    <lineage>
        <taxon>Bacteria</taxon>
        <taxon>Pseudomonadati</taxon>
        <taxon>Pseudomonadota</taxon>
        <taxon>Gammaproteobacteria</taxon>
        <taxon>Enterobacterales</taxon>
        <taxon>Enterobacteriaceae</taxon>
        <taxon>Salmonella</taxon>
    </lineage>
</organism>
<sequence length="502" mass="56052">MTEKKYIVALDQGTTSSRAVVMDHDANIVSVSQREFEQIYPKPGWVEHDPMEIWASQSSTLVEVLAKADISSDQIAAIGITNQRETAIVWERETGKPIYNAIVWQCRRTADICEQLKRDGLEDYIRDNTGLVVDPYFSGTKVKWILDHVEGSRERAKRGELLFGTVDTWLIWKMTQGRVHVTDYTNASRTMLFNIHDLDWDDKMLDVLDIPRAMLPQVRKSSEVYGQTNIGGKGGTRIPIAGIAGDQQAALFGQLCVKEGMAKNTYGTGCFMLMNTGEKAVKSENGLLTTIACGPSGEVNYALEGAVFMAGASIQWLRDEMKLISDAFDSEYFATKVKDTNGVYVVPAFTGLGAPYWDPYARGAIFGLTRGVNSNHIIRATLESIAYQTRDVLEAMQADSGIRLHALRVDGGAVANNFLMQFQSDILGTRVERPEVREVTALGAAYLAGLAVGYWQNLDELQEKAVIEREFRPGIETTERNYRYSGWKKAVKRAMAWEEHDK</sequence>
<protein>
    <recommendedName>
        <fullName evidence="1">Glycerol kinase</fullName>
        <ecNumber evidence="1">2.7.1.30</ecNumber>
    </recommendedName>
    <alternativeName>
        <fullName evidence="1">ATP:glycerol 3-phosphotransferase</fullName>
    </alternativeName>
    <alternativeName>
        <fullName evidence="1">Glycerokinase</fullName>
        <shortName evidence="1">GK</shortName>
    </alternativeName>
</protein>
<dbReference type="EC" id="2.7.1.30" evidence="1"/>
<dbReference type="EMBL" id="CP001113">
    <property type="protein sequence ID" value="ACF61286.1"/>
    <property type="molecule type" value="Genomic_DNA"/>
</dbReference>
<dbReference type="RefSeq" id="WP_000136809.1">
    <property type="nucleotide sequence ID" value="NZ_CCMR01000001.1"/>
</dbReference>
<dbReference type="SMR" id="B4T0T2"/>
<dbReference type="KEGG" id="see:SNSL254_A4415"/>
<dbReference type="HOGENOM" id="CLU_009281_2_3_6"/>
<dbReference type="UniPathway" id="UPA00618">
    <property type="reaction ID" value="UER00672"/>
</dbReference>
<dbReference type="Proteomes" id="UP000008824">
    <property type="component" value="Chromosome"/>
</dbReference>
<dbReference type="GO" id="GO:0005829">
    <property type="term" value="C:cytosol"/>
    <property type="evidence" value="ECO:0007669"/>
    <property type="project" value="TreeGrafter"/>
</dbReference>
<dbReference type="GO" id="GO:0005524">
    <property type="term" value="F:ATP binding"/>
    <property type="evidence" value="ECO:0007669"/>
    <property type="project" value="UniProtKB-UniRule"/>
</dbReference>
<dbReference type="GO" id="GO:0004370">
    <property type="term" value="F:glycerol kinase activity"/>
    <property type="evidence" value="ECO:0000250"/>
    <property type="project" value="UniProtKB"/>
</dbReference>
<dbReference type="GO" id="GO:0046872">
    <property type="term" value="F:metal ion binding"/>
    <property type="evidence" value="ECO:0007669"/>
    <property type="project" value="UniProtKB-KW"/>
</dbReference>
<dbReference type="GO" id="GO:0019563">
    <property type="term" value="P:glycerol catabolic process"/>
    <property type="evidence" value="ECO:0007669"/>
    <property type="project" value="UniProtKB-UniRule"/>
</dbReference>
<dbReference type="GO" id="GO:0006071">
    <property type="term" value="P:glycerol metabolic process"/>
    <property type="evidence" value="ECO:0000250"/>
    <property type="project" value="UniProtKB"/>
</dbReference>
<dbReference type="GO" id="GO:0006072">
    <property type="term" value="P:glycerol-3-phosphate metabolic process"/>
    <property type="evidence" value="ECO:0007669"/>
    <property type="project" value="InterPro"/>
</dbReference>
<dbReference type="CDD" id="cd07786">
    <property type="entry name" value="FGGY_EcGK_like"/>
    <property type="match status" value="1"/>
</dbReference>
<dbReference type="FunFam" id="3.30.420.40:FF:000007">
    <property type="entry name" value="Glycerol kinase"/>
    <property type="match status" value="1"/>
</dbReference>
<dbReference type="FunFam" id="3.30.420.40:FF:000008">
    <property type="entry name" value="Glycerol kinase"/>
    <property type="match status" value="1"/>
</dbReference>
<dbReference type="Gene3D" id="3.30.420.40">
    <property type="match status" value="2"/>
</dbReference>
<dbReference type="HAMAP" id="MF_00186">
    <property type="entry name" value="Glycerol_kin"/>
    <property type="match status" value="1"/>
</dbReference>
<dbReference type="InterPro" id="IPR043129">
    <property type="entry name" value="ATPase_NBD"/>
</dbReference>
<dbReference type="InterPro" id="IPR000577">
    <property type="entry name" value="Carb_kinase_FGGY"/>
</dbReference>
<dbReference type="InterPro" id="IPR018483">
    <property type="entry name" value="Carb_kinase_FGGY_CS"/>
</dbReference>
<dbReference type="InterPro" id="IPR018485">
    <property type="entry name" value="FGGY_C"/>
</dbReference>
<dbReference type="InterPro" id="IPR018484">
    <property type="entry name" value="FGGY_N"/>
</dbReference>
<dbReference type="InterPro" id="IPR005999">
    <property type="entry name" value="Glycerol_kin"/>
</dbReference>
<dbReference type="NCBIfam" id="TIGR01311">
    <property type="entry name" value="glycerol_kin"/>
    <property type="match status" value="1"/>
</dbReference>
<dbReference type="NCBIfam" id="NF000756">
    <property type="entry name" value="PRK00047.1"/>
    <property type="match status" value="1"/>
</dbReference>
<dbReference type="PANTHER" id="PTHR10196:SF69">
    <property type="entry name" value="GLYCEROL KINASE"/>
    <property type="match status" value="1"/>
</dbReference>
<dbReference type="PANTHER" id="PTHR10196">
    <property type="entry name" value="SUGAR KINASE"/>
    <property type="match status" value="1"/>
</dbReference>
<dbReference type="Pfam" id="PF02782">
    <property type="entry name" value="FGGY_C"/>
    <property type="match status" value="1"/>
</dbReference>
<dbReference type="Pfam" id="PF00370">
    <property type="entry name" value="FGGY_N"/>
    <property type="match status" value="1"/>
</dbReference>
<dbReference type="PIRSF" id="PIRSF000538">
    <property type="entry name" value="GlpK"/>
    <property type="match status" value="1"/>
</dbReference>
<dbReference type="SUPFAM" id="SSF53067">
    <property type="entry name" value="Actin-like ATPase domain"/>
    <property type="match status" value="2"/>
</dbReference>
<dbReference type="PROSITE" id="PS00933">
    <property type="entry name" value="FGGY_KINASES_1"/>
    <property type="match status" value="1"/>
</dbReference>
<dbReference type="PROSITE" id="PS00445">
    <property type="entry name" value="FGGY_KINASES_2"/>
    <property type="match status" value="1"/>
</dbReference>
<evidence type="ECO:0000255" key="1">
    <source>
        <dbReference type="HAMAP-Rule" id="MF_00186"/>
    </source>
</evidence>
<gene>
    <name evidence="1" type="primary">glpK</name>
    <name type="ordered locus">SNSL254_A4415</name>
</gene>
<keyword id="KW-0021">Allosteric enzyme</keyword>
<keyword id="KW-0067">ATP-binding</keyword>
<keyword id="KW-0319">Glycerol metabolism</keyword>
<keyword id="KW-0418">Kinase</keyword>
<keyword id="KW-0479">Metal-binding</keyword>
<keyword id="KW-0547">Nucleotide-binding</keyword>
<keyword id="KW-0808">Transferase</keyword>
<keyword id="KW-0862">Zinc</keyword>
<comment type="function">
    <text evidence="1">Key enzyme in the regulation of glycerol uptake and metabolism. Catalyzes the phosphorylation of glycerol to yield sn-glycerol 3-phosphate.</text>
</comment>
<comment type="catalytic activity">
    <reaction evidence="1">
        <text>glycerol + ATP = sn-glycerol 3-phosphate + ADP + H(+)</text>
        <dbReference type="Rhea" id="RHEA:21644"/>
        <dbReference type="ChEBI" id="CHEBI:15378"/>
        <dbReference type="ChEBI" id="CHEBI:17754"/>
        <dbReference type="ChEBI" id="CHEBI:30616"/>
        <dbReference type="ChEBI" id="CHEBI:57597"/>
        <dbReference type="ChEBI" id="CHEBI:456216"/>
        <dbReference type="EC" id="2.7.1.30"/>
    </reaction>
</comment>
<comment type="activity regulation">
    <text evidence="1">Activity of this regulatory enzyme is affected by several metabolites. Allosterically and non-competitively inhibited by fructose 1,6-bisphosphate (FBP) and unphosphorylated phosphocarrier protein EIIA-Glc (III-Glc), an integral component of the bacterial phosphotransferase (PTS) system.</text>
</comment>
<comment type="pathway">
    <text evidence="1">Polyol metabolism; glycerol degradation via glycerol kinase pathway; sn-glycerol 3-phosphate from glycerol: step 1/1.</text>
</comment>
<comment type="subunit">
    <text evidence="1">Homotetramer and homodimer (in equilibrium). Heterodimer with EIIA-Glc. Binds 1 zinc ion per glycerol kinase EIIA-Glc dimer. The zinc ion is important for dimerization.</text>
</comment>
<comment type="similarity">
    <text evidence="1">Belongs to the FGGY kinase family.</text>
</comment>
<feature type="chain" id="PRO_1000098759" description="Glycerol kinase">
    <location>
        <begin position="1"/>
        <end position="502"/>
    </location>
</feature>
<feature type="binding site" evidence="1">
    <location>
        <position position="14"/>
    </location>
    <ligand>
        <name>ADP</name>
        <dbReference type="ChEBI" id="CHEBI:456216"/>
    </ligand>
</feature>
<feature type="binding site" evidence="1">
    <location>
        <position position="14"/>
    </location>
    <ligand>
        <name>ATP</name>
        <dbReference type="ChEBI" id="CHEBI:30616"/>
    </ligand>
</feature>
<feature type="binding site" evidence="1">
    <location>
        <position position="14"/>
    </location>
    <ligand>
        <name>sn-glycerol 3-phosphate</name>
        <dbReference type="ChEBI" id="CHEBI:57597"/>
    </ligand>
</feature>
<feature type="binding site" evidence="1">
    <location>
        <position position="15"/>
    </location>
    <ligand>
        <name>ATP</name>
        <dbReference type="ChEBI" id="CHEBI:30616"/>
    </ligand>
</feature>
<feature type="binding site" evidence="1">
    <location>
        <position position="16"/>
    </location>
    <ligand>
        <name>ATP</name>
        <dbReference type="ChEBI" id="CHEBI:30616"/>
    </ligand>
</feature>
<feature type="binding site" evidence="1">
    <location>
        <position position="18"/>
    </location>
    <ligand>
        <name>ADP</name>
        <dbReference type="ChEBI" id="CHEBI:456216"/>
    </ligand>
</feature>
<feature type="binding site" evidence="1">
    <location>
        <position position="84"/>
    </location>
    <ligand>
        <name>glycerol</name>
        <dbReference type="ChEBI" id="CHEBI:17754"/>
    </ligand>
</feature>
<feature type="binding site" evidence="1">
    <location>
        <position position="84"/>
    </location>
    <ligand>
        <name>sn-glycerol 3-phosphate</name>
        <dbReference type="ChEBI" id="CHEBI:57597"/>
    </ligand>
</feature>
<feature type="binding site" evidence="1">
    <location>
        <position position="85"/>
    </location>
    <ligand>
        <name>glycerol</name>
        <dbReference type="ChEBI" id="CHEBI:17754"/>
    </ligand>
</feature>
<feature type="binding site" evidence="1">
    <location>
        <position position="85"/>
    </location>
    <ligand>
        <name>sn-glycerol 3-phosphate</name>
        <dbReference type="ChEBI" id="CHEBI:57597"/>
    </ligand>
</feature>
<feature type="binding site" evidence="1">
    <location>
        <position position="136"/>
    </location>
    <ligand>
        <name>glycerol</name>
        <dbReference type="ChEBI" id="CHEBI:17754"/>
    </ligand>
</feature>
<feature type="binding site" evidence="1">
    <location>
        <position position="136"/>
    </location>
    <ligand>
        <name>sn-glycerol 3-phosphate</name>
        <dbReference type="ChEBI" id="CHEBI:57597"/>
    </ligand>
</feature>
<feature type="binding site" evidence="1">
    <location>
        <position position="246"/>
    </location>
    <ligand>
        <name>glycerol</name>
        <dbReference type="ChEBI" id="CHEBI:17754"/>
    </ligand>
</feature>
<feature type="binding site" evidence="1">
    <location>
        <position position="246"/>
    </location>
    <ligand>
        <name>sn-glycerol 3-phosphate</name>
        <dbReference type="ChEBI" id="CHEBI:57597"/>
    </ligand>
</feature>
<feature type="binding site" evidence="1">
    <location>
        <position position="247"/>
    </location>
    <ligand>
        <name>glycerol</name>
        <dbReference type="ChEBI" id="CHEBI:17754"/>
    </ligand>
</feature>
<feature type="binding site" evidence="1">
    <location>
        <position position="268"/>
    </location>
    <ligand>
        <name>ADP</name>
        <dbReference type="ChEBI" id="CHEBI:456216"/>
    </ligand>
</feature>
<feature type="binding site" evidence="1">
    <location>
        <position position="268"/>
    </location>
    <ligand>
        <name>ATP</name>
        <dbReference type="ChEBI" id="CHEBI:30616"/>
    </ligand>
</feature>
<feature type="binding site" evidence="1">
    <location>
        <position position="311"/>
    </location>
    <ligand>
        <name>ADP</name>
        <dbReference type="ChEBI" id="CHEBI:456216"/>
    </ligand>
</feature>
<feature type="binding site" evidence="1">
    <location>
        <position position="311"/>
    </location>
    <ligand>
        <name>ATP</name>
        <dbReference type="ChEBI" id="CHEBI:30616"/>
    </ligand>
</feature>
<feature type="binding site" evidence="1">
    <location>
        <position position="315"/>
    </location>
    <ligand>
        <name>ATP</name>
        <dbReference type="ChEBI" id="CHEBI:30616"/>
    </ligand>
</feature>
<feature type="binding site" evidence="1">
    <location>
        <position position="412"/>
    </location>
    <ligand>
        <name>ADP</name>
        <dbReference type="ChEBI" id="CHEBI:456216"/>
    </ligand>
</feature>
<feature type="binding site" evidence="1">
    <location>
        <position position="412"/>
    </location>
    <ligand>
        <name>ATP</name>
        <dbReference type="ChEBI" id="CHEBI:30616"/>
    </ligand>
</feature>
<feature type="binding site" evidence="1">
    <location>
        <position position="416"/>
    </location>
    <ligand>
        <name>ADP</name>
        <dbReference type="ChEBI" id="CHEBI:456216"/>
    </ligand>
</feature>
<accession>B4T0T2</accession>
<proteinExistence type="inferred from homology"/>
<reference key="1">
    <citation type="journal article" date="2011" name="J. Bacteriol.">
        <title>Comparative genomics of 28 Salmonella enterica isolates: evidence for CRISPR-mediated adaptive sublineage evolution.</title>
        <authorList>
            <person name="Fricke W.F."/>
            <person name="Mammel M.K."/>
            <person name="McDermott P.F."/>
            <person name="Tartera C."/>
            <person name="White D.G."/>
            <person name="Leclerc J.E."/>
            <person name="Ravel J."/>
            <person name="Cebula T.A."/>
        </authorList>
    </citation>
    <scope>NUCLEOTIDE SEQUENCE [LARGE SCALE GENOMIC DNA]</scope>
    <source>
        <strain>SL254</strain>
    </source>
</reference>
<name>GLPK_SALNS</name>